<sequence>MTDGDYDYLIKLLALGDSGVGKTTFLYRYTDNKFNPKFITTVGIDFREKRVVYNAQGPNGSSGKAFKVHLQLWDTAGQERFRSLTTAFFRDAMGFLLMFDLTSQQSFLNVRNWMSQLQANAYCENPDIVLIGNKADLPDQREVNERQARELADKYGIPYFETSAATGQNVEKAVETLLDLIMKRMEQCVEKTQIPDTVNGGNSGNLDGEKPPEKKCIC</sequence>
<organism>
    <name type="scientific">Homo sapiens</name>
    <name type="common">Human</name>
    <dbReference type="NCBI Taxonomy" id="9606"/>
    <lineage>
        <taxon>Eukaryota</taxon>
        <taxon>Metazoa</taxon>
        <taxon>Chordata</taxon>
        <taxon>Craniata</taxon>
        <taxon>Vertebrata</taxon>
        <taxon>Euteleostomi</taxon>
        <taxon>Mammalia</taxon>
        <taxon>Eutheria</taxon>
        <taxon>Euarchontoglires</taxon>
        <taxon>Primates</taxon>
        <taxon>Haplorrhini</taxon>
        <taxon>Catarrhini</taxon>
        <taxon>Hominidae</taxon>
        <taxon>Homo</taxon>
    </lineage>
</organism>
<reference key="1">
    <citation type="journal article" date="1997" name="Biochem. Mol. Med.">
        <title>Molecular cloning and characterization of rab27a and rab27b, novel human rab proteins shared by melanocytes and platelets.</title>
        <authorList>
            <person name="Chen D."/>
            <person name="Guo J."/>
            <person name="Miki T."/>
            <person name="Tachibana M."/>
            <person name="Gahl W.A."/>
        </authorList>
    </citation>
    <scope>NUCLEOTIDE SEQUENCE [MRNA]</scope>
    <source>
        <tissue>Melanocyte</tissue>
    </source>
</reference>
<reference key="2">
    <citation type="submission" date="1999-06" db="EMBL/GenBank/DDBJ databases">
        <authorList>
            <person name="Chen D."/>
            <person name="Gahl W.A."/>
        </authorList>
    </citation>
    <scope>SEQUENCE REVISION TO 206</scope>
</reference>
<reference key="3">
    <citation type="journal article" date="2001" name="BMC Genet.">
        <title>Chromosomal mapping, gene structure and characterization of the human and murine RAB27B gene.</title>
        <authorList>
            <person name="Ramalho J.S."/>
            <person name="Tolmachova T."/>
            <person name="Hume A.N."/>
            <person name="McGuigan A."/>
            <person name="Gregory-Evans C.Y."/>
            <person name="Huxley C."/>
            <person name="Seabra M.C."/>
        </authorList>
    </citation>
    <scope>NUCLEOTIDE SEQUENCE [MRNA]</scope>
</reference>
<reference key="4">
    <citation type="submission" date="2002-04" db="EMBL/GenBank/DDBJ databases">
        <title>cDNA clones of human proteins involved in signal transduction sequenced by the Guthrie cDNA resource center (www.cdna.org).</title>
        <authorList>
            <person name="Puhl H.L. III"/>
            <person name="Ikeda S.R."/>
            <person name="Aronstam R.S."/>
        </authorList>
    </citation>
    <scope>NUCLEOTIDE SEQUENCE [LARGE SCALE MRNA]</scope>
    <source>
        <tissue>Brain</tissue>
    </source>
</reference>
<reference key="5">
    <citation type="journal article" date="2004" name="Nat. Genet.">
        <title>Complete sequencing and characterization of 21,243 full-length human cDNAs.</title>
        <authorList>
            <person name="Ota T."/>
            <person name="Suzuki Y."/>
            <person name="Nishikawa T."/>
            <person name="Otsuki T."/>
            <person name="Sugiyama T."/>
            <person name="Irie R."/>
            <person name="Wakamatsu A."/>
            <person name="Hayashi K."/>
            <person name="Sato H."/>
            <person name="Nagai K."/>
            <person name="Kimura K."/>
            <person name="Makita H."/>
            <person name="Sekine M."/>
            <person name="Obayashi M."/>
            <person name="Nishi T."/>
            <person name="Shibahara T."/>
            <person name="Tanaka T."/>
            <person name="Ishii S."/>
            <person name="Yamamoto J."/>
            <person name="Saito K."/>
            <person name="Kawai Y."/>
            <person name="Isono Y."/>
            <person name="Nakamura Y."/>
            <person name="Nagahari K."/>
            <person name="Murakami K."/>
            <person name="Yasuda T."/>
            <person name="Iwayanagi T."/>
            <person name="Wagatsuma M."/>
            <person name="Shiratori A."/>
            <person name="Sudo H."/>
            <person name="Hosoiri T."/>
            <person name="Kaku Y."/>
            <person name="Kodaira H."/>
            <person name="Kondo H."/>
            <person name="Sugawara M."/>
            <person name="Takahashi M."/>
            <person name="Kanda K."/>
            <person name="Yokoi T."/>
            <person name="Furuya T."/>
            <person name="Kikkawa E."/>
            <person name="Omura Y."/>
            <person name="Abe K."/>
            <person name="Kamihara K."/>
            <person name="Katsuta N."/>
            <person name="Sato K."/>
            <person name="Tanikawa M."/>
            <person name="Yamazaki M."/>
            <person name="Ninomiya K."/>
            <person name="Ishibashi T."/>
            <person name="Yamashita H."/>
            <person name="Murakawa K."/>
            <person name="Fujimori K."/>
            <person name="Tanai H."/>
            <person name="Kimata M."/>
            <person name="Watanabe M."/>
            <person name="Hiraoka S."/>
            <person name="Chiba Y."/>
            <person name="Ishida S."/>
            <person name="Ono Y."/>
            <person name="Takiguchi S."/>
            <person name="Watanabe S."/>
            <person name="Yosida M."/>
            <person name="Hotuta T."/>
            <person name="Kusano J."/>
            <person name="Kanehori K."/>
            <person name="Takahashi-Fujii A."/>
            <person name="Hara H."/>
            <person name="Tanase T.-O."/>
            <person name="Nomura Y."/>
            <person name="Togiya S."/>
            <person name="Komai F."/>
            <person name="Hara R."/>
            <person name="Takeuchi K."/>
            <person name="Arita M."/>
            <person name="Imose N."/>
            <person name="Musashino K."/>
            <person name="Yuuki H."/>
            <person name="Oshima A."/>
            <person name="Sasaki N."/>
            <person name="Aotsuka S."/>
            <person name="Yoshikawa Y."/>
            <person name="Matsunawa H."/>
            <person name="Ichihara T."/>
            <person name="Shiohata N."/>
            <person name="Sano S."/>
            <person name="Moriya S."/>
            <person name="Momiyama H."/>
            <person name="Satoh N."/>
            <person name="Takami S."/>
            <person name="Terashima Y."/>
            <person name="Suzuki O."/>
            <person name="Nakagawa S."/>
            <person name="Senoh A."/>
            <person name="Mizoguchi H."/>
            <person name="Goto Y."/>
            <person name="Shimizu F."/>
            <person name="Wakebe H."/>
            <person name="Hishigaki H."/>
            <person name="Watanabe T."/>
            <person name="Sugiyama A."/>
            <person name="Takemoto M."/>
            <person name="Kawakami B."/>
            <person name="Yamazaki M."/>
            <person name="Watanabe K."/>
            <person name="Kumagai A."/>
            <person name="Itakura S."/>
            <person name="Fukuzumi Y."/>
            <person name="Fujimori Y."/>
            <person name="Komiyama M."/>
            <person name="Tashiro H."/>
            <person name="Tanigami A."/>
            <person name="Fujiwara T."/>
            <person name="Ono T."/>
            <person name="Yamada K."/>
            <person name="Fujii Y."/>
            <person name="Ozaki K."/>
            <person name="Hirao M."/>
            <person name="Ohmori Y."/>
            <person name="Kawabata A."/>
            <person name="Hikiji T."/>
            <person name="Kobatake N."/>
            <person name="Inagaki H."/>
            <person name="Ikema Y."/>
            <person name="Okamoto S."/>
            <person name="Okitani R."/>
            <person name="Kawakami T."/>
            <person name="Noguchi S."/>
            <person name="Itoh T."/>
            <person name="Shigeta K."/>
            <person name="Senba T."/>
            <person name="Matsumura K."/>
            <person name="Nakajima Y."/>
            <person name="Mizuno T."/>
            <person name="Morinaga M."/>
            <person name="Sasaki M."/>
            <person name="Togashi T."/>
            <person name="Oyama M."/>
            <person name="Hata H."/>
            <person name="Watanabe M."/>
            <person name="Komatsu T."/>
            <person name="Mizushima-Sugano J."/>
            <person name="Satoh T."/>
            <person name="Shirai Y."/>
            <person name="Takahashi Y."/>
            <person name="Nakagawa K."/>
            <person name="Okumura K."/>
            <person name="Nagase T."/>
            <person name="Nomura N."/>
            <person name="Kikuchi H."/>
            <person name="Masuho Y."/>
            <person name="Yamashita R."/>
            <person name="Nakai K."/>
            <person name="Yada T."/>
            <person name="Nakamura Y."/>
            <person name="Ohara O."/>
            <person name="Isogai T."/>
            <person name="Sugano S."/>
        </authorList>
    </citation>
    <scope>NUCLEOTIDE SEQUENCE [LARGE SCALE MRNA]</scope>
    <source>
        <tissue>Amygdala</tissue>
    </source>
</reference>
<reference key="6">
    <citation type="submission" date="2005-07" db="EMBL/GenBank/DDBJ databases">
        <authorList>
            <person name="Mural R.J."/>
            <person name="Istrail S."/>
            <person name="Sutton G.G."/>
            <person name="Florea L."/>
            <person name="Halpern A.L."/>
            <person name="Mobarry C.M."/>
            <person name="Lippert R."/>
            <person name="Walenz B."/>
            <person name="Shatkay H."/>
            <person name="Dew I."/>
            <person name="Miller J.R."/>
            <person name="Flanigan M.J."/>
            <person name="Edwards N.J."/>
            <person name="Bolanos R."/>
            <person name="Fasulo D."/>
            <person name="Halldorsson B.V."/>
            <person name="Hannenhalli S."/>
            <person name="Turner R."/>
            <person name="Yooseph S."/>
            <person name="Lu F."/>
            <person name="Nusskern D.R."/>
            <person name="Shue B.C."/>
            <person name="Zheng X.H."/>
            <person name="Zhong F."/>
            <person name="Delcher A.L."/>
            <person name="Huson D.H."/>
            <person name="Kravitz S.A."/>
            <person name="Mouchard L."/>
            <person name="Reinert K."/>
            <person name="Remington K.A."/>
            <person name="Clark A.G."/>
            <person name="Waterman M.S."/>
            <person name="Eichler E.E."/>
            <person name="Adams M.D."/>
            <person name="Hunkapiller M.W."/>
            <person name="Myers E.W."/>
            <person name="Venter J.C."/>
        </authorList>
    </citation>
    <scope>NUCLEOTIDE SEQUENCE [LARGE SCALE GENOMIC DNA]</scope>
</reference>
<reference key="7">
    <citation type="journal article" date="2004" name="Genome Res.">
        <title>The status, quality, and expansion of the NIH full-length cDNA project: the Mammalian Gene Collection (MGC).</title>
        <authorList>
            <consortium name="The MGC Project Team"/>
        </authorList>
    </citation>
    <scope>NUCLEOTIDE SEQUENCE [LARGE SCALE MRNA]</scope>
    <source>
        <tissue>Prostate</tissue>
    </source>
</reference>
<reference key="8">
    <citation type="journal article" date="1989" name="J. Biol. Chem.">
        <title>Purification, identification, and characterization of two GTP-binding proteins with molecular weights of 25,000 and 21,000 in human platelet cytosol. One is the rap1/smg21/Krev-1 protein and the other is a novel GTP-binding protein.</title>
        <authorList>
            <person name="Nagata K."/>
            <person name="Itoh H."/>
            <person name="Katada T."/>
            <person name="Takenaka K."/>
            <person name="Ui M."/>
            <person name="Kaziro Y."/>
            <person name="Nozawa Y."/>
        </authorList>
    </citation>
    <scope>PARTIAL PROTEIN SEQUENCE</scope>
    <source>
        <tissue>Platelet</tissue>
    </source>
</reference>
<reference key="9">
    <citation type="submission" date="2005-11" db="UniProtKB">
        <authorList>
            <person name="Bienvenut W.V."/>
            <person name="Claeys D."/>
        </authorList>
    </citation>
    <scope>PROTEIN SEQUENCE OF 2-28; 38-47; 50-64; 68-80 AND 150-184</scope>
    <scope>CLEAVAGE OF INITIATOR METHIONINE</scope>
    <scope>ACETYLATION AT THR-2</scope>
    <scope>IDENTIFICATION BY MASS SPECTROMETRY</scope>
    <source>
        <tissue>Platelet</tissue>
    </source>
</reference>
<reference key="10">
    <citation type="journal article" date="2011" name="BMC Syst. Biol.">
        <title>Initial characterization of the human central proteome.</title>
        <authorList>
            <person name="Burkard T.R."/>
            <person name="Planyavsky M."/>
            <person name="Kaupe I."/>
            <person name="Breitwieser F.P."/>
            <person name="Buerckstuemmer T."/>
            <person name="Bennett K.L."/>
            <person name="Superti-Furga G."/>
            <person name="Colinge J."/>
        </authorList>
    </citation>
    <scope>IDENTIFICATION BY MASS SPECTROMETRY [LARGE SCALE ANALYSIS]</scope>
</reference>
<reference key="11">
    <citation type="journal article" date="2011" name="J. Neurosci.">
        <title>JIP3 mediates TrkB axonal anterograde transport and enhances BDNF signaling by directly bridging TrkB with kinesin-1.</title>
        <authorList>
            <person name="Huang S.H."/>
            <person name="Duan S."/>
            <person name="Sun T."/>
            <person name="Wang J."/>
            <person name="Zhao L."/>
            <person name="Geng Z."/>
            <person name="Yan J."/>
            <person name="Sun H.J."/>
            <person name="Chen Z.Y."/>
        </authorList>
    </citation>
    <scope>FUNCTION</scope>
</reference>
<reference key="12">
    <citation type="journal article" date="2015" name="Proteomics">
        <title>N-terminome analysis of the human mitochondrial proteome.</title>
        <authorList>
            <person name="Vaca Jacome A.S."/>
            <person name="Rabilloud T."/>
            <person name="Schaeffer-Reiss C."/>
            <person name="Rompais M."/>
            <person name="Ayoub D."/>
            <person name="Lane L."/>
            <person name="Bairoch A."/>
            <person name="Van Dorsselaer A."/>
            <person name="Carapito C."/>
        </authorList>
    </citation>
    <scope>IDENTIFICATION BY MASS SPECTROMETRY [LARGE SCALE ANALYSIS]</scope>
</reference>
<reference key="13">
    <citation type="journal article" date="2019" name="Biochim. Biophys. Acta">
        <title>DENN domain-containing protein FAM45A regulates the homeostasis of late/multivesicular endosomes.</title>
        <authorList>
            <person name="Zhang J."/>
            <person name="Zhang K."/>
            <person name="Qi L."/>
            <person name="Hu Q."/>
            <person name="Shen Z."/>
            <person name="Liu B."/>
            <person name="Deng J."/>
            <person name="Zhang C."/>
            <person name="Zhang Y."/>
        </authorList>
    </citation>
    <scope>FUNCTION</scope>
    <scope>SUBCELLULAR LOCATION</scope>
    <scope>INTERACTION WITH DENND10</scope>
    <scope>ACTIVITY REGULATION</scope>
    <scope>MUTAGENESIS OF THR-23 AND GLN-78</scope>
</reference>
<reference key="14">
    <citation type="submission" date="2009-02" db="PDB data bank">
        <title>The crystal structure of human RAB27B.</title>
        <authorList>
            <consortium name="Structural genomics consortium (SGC)"/>
        </authorList>
    </citation>
    <scope>X-RAY CRYSTALLOGRAPHY (2.7 ANGSTROMS) OF 4-201 IN COMPLEX WITH GDP</scope>
    <scope>DISULFIDE BOND</scope>
</reference>
<evidence type="ECO:0000250" key="1"/>
<evidence type="ECO:0000250" key="2">
    <source>
        <dbReference type="UniProtKB" id="Q8HZJ5"/>
    </source>
</evidence>
<evidence type="ECO:0000250" key="3">
    <source>
        <dbReference type="UniProtKB" id="Q99P58"/>
    </source>
</evidence>
<evidence type="ECO:0000256" key="4">
    <source>
        <dbReference type="SAM" id="MobiDB-lite"/>
    </source>
</evidence>
<evidence type="ECO:0000269" key="5">
    <source>
    </source>
</evidence>
<evidence type="ECO:0000269" key="6">
    <source>
    </source>
</evidence>
<evidence type="ECO:0000269" key="7">
    <source ref="14"/>
</evidence>
<evidence type="ECO:0000269" key="8">
    <source ref="9"/>
</evidence>
<evidence type="ECO:0000305" key="9"/>
<evidence type="ECO:0000305" key="10">
    <source>
    </source>
</evidence>
<evidence type="ECO:0007829" key="11">
    <source>
        <dbReference type="PDB" id="2F7S"/>
    </source>
</evidence>
<name>RB27B_HUMAN</name>
<keyword id="KW-0002">3D-structure</keyword>
<keyword id="KW-0007">Acetylation</keyword>
<keyword id="KW-0903">Direct protein sequencing</keyword>
<keyword id="KW-1015">Disulfide bond</keyword>
<keyword id="KW-0967">Endosome</keyword>
<keyword id="KW-0342">GTP-binding</keyword>
<keyword id="KW-0378">Hydrolase</keyword>
<keyword id="KW-0449">Lipoprotein</keyword>
<keyword id="KW-0472">Membrane</keyword>
<keyword id="KW-0488">Methylation</keyword>
<keyword id="KW-0547">Nucleotide-binding</keyword>
<keyword id="KW-0636">Prenylation</keyword>
<keyword id="KW-1267">Proteomics identification</keyword>
<keyword id="KW-1185">Reference proteome</keyword>
<protein>
    <recommendedName>
        <fullName>Ras-related protein Rab-27B</fullName>
        <ecNumber evidence="10">3.6.5.2</ecNumber>
    </recommendedName>
    <alternativeName>
        <fullName>C25KG</fullName>
    </alternativeName>
</protein>
<gene>
    <name type="primary">RAB27B</name>
</gene>
<dbReference type="EC" id="3.6.5.2" evidence="10"/>
<dbReference type="EMBL" id="U57093">
    <property type="protein sequence ID" value="AAC51194.2"/>
    <property type="molecule type" value="mRNA"/>
</dbReference>
<dbReference type="EMBL" id="AF329499">
    <property type="protein sequence ID" value="AAK11243.1"/>
    <property type="molecule type" value="mRNA"/>
</dbReference>
<dbReference type="EMBL" id="AF498954">
    <property type="protein sequence ID" value="AAM21102.1"/>
    <property type="molecule type" value="mRNA"/>
</dbReference>
<dbReference type="EMBL" id="AK314115">
    <property type="protein sequence ID" value="BAG36807.1"/>
    <property type="molecule type" value="mRNA"/>
</dbReference>
<dbReference type="EMBL" id="CH471096">
    <property type="protein sequence ID" value="EAW63010.1"/>
    <property type="molecule type" value="Genomic_DNA"/>
</dbReference>
<dbReference type="EMBL" id="BC027474">
    <property type="protein sequence ID" value="AAH27474.1"/>
    <property type="molecule type" value="mRNA"/>
</dbReference>
<dbReference type="CCDS" id="CCDS11958.1"/>
<dbReference type="RefSeq" id="NP_001362256.1">
    <property type="nucleotide sequence ID" value="NM_001375327.1"/>
</dbReference>
<dbReference type="RefSeq" id="NP_004154.2">
    <property type="nucleotide sequence ID" value="NM_004163.4"/>
</dbReference>
<dbReference type="RefSeq" id="XP_005266790.1">
    <property type="nucleotide sequence ID" value="XM_005266733.1"/>
</dbReference>
<dbReference type="RefSeq" id="XP_016881402.1">
    <property type="nucleotide sequence ID" value="XM_017025913.2"/>
</dbReference>
<dbReference type="RefSeq" id="XP_016881403.1">
    <property type="nucleotide sequence ID" value="XM_017025914.2"/>
</dbReference>
<dbReference type="RefSeq" id="XP_024307000.1">
    <property type="nucleotide sequence ID" value="XM_024451232.2"/>
</dbReference>
<dbReference type="RefSeq" id="XP_047293681.1">
    <property type="nucleotide sequence ID" value="XM_047437725.1"/>
</dbReference>
<dbReference type="RefSeq" id="XP_047293682.1">
    <property type="nucleotide sequence ID" value="XM_047437726.1"/>
</dbReference>
<dbReference type="RefSeq" id="XP_054174925.1">
    <property type="nucleotide sequence ID" value="XM_054318950.1"/>
</dbReference>
<dbReference type="RefSeq" id="XP_054174926.1">
    <property type="nucleotide sequence ID" value="XM_054318951.1"/>
</dbReference>
<dbReference type="RefSeq" id="XP_054174927.1">
    <property type="nucleotide sequence ID" value="XM_054318952.1"/>
</dbReference>
<dbReference type="RefSeq" id="XP_054174928.1">
    <property type="nucleotide sequence ID" value="XM_054318953.1"/>
</dbReference>
<dbReference type="RefSeq" id="XP_054174929.1">
    <property type="nucleotide sequence ID" value="XM_054318954.1"/>
</dbReference>
<dbReference type="PDB" id="2F7S">
    <property type="method" value="X-ray"/>
    <property type="resolution" value="2.70 A"/>
    <property type="chains" value="A/B=4-201"/>
</dbReference>
<dbReference type="PDBsum" id="2F7S"/>
<dbReference type="SMR" id="O00194"/>
<dbReference type="BioGRID" id="111812">
    <property type="interactions" value="43"/>
</dbReference>
<dbReference type="DIP" id="DIP-48948N"/>
<dbReference type="FunCoup" id="O00194">
    <property type="interactions" value="583"/>
</dbReference>
<dbReference type="IntAct" id="O00194">
    <property type="interactions" value="25"/>
</dbReference>
<dbReference type="STRING" id="9606.ENSP00000262094"/>
<dbReference type="GlyGen" id="O00194">
    <property type="glycosylation" value="1 site, 1 O-linked glycan (1 site)"/>
</dbReference>
<dbReference type="iPTMnet" id="O00194"/>
<dbReference type="PhosphoSitePlus" id="O00194"/>
<dbReference type="SwissPalm" id="O00194"/>
<dbReference type="BioMuta" id="RAB27B"/>
<dbReference type="OGP" id="O00194"/>
<dbReference type="jPOST" id="O00194"/>
<dbReference type="MassIVE" id="O00194"/>
<dbReference type="PaxDb" id="9606-ENSP00000262094"/>
<dbReference type="PeptideAtlas" id="O00194"/>
<dbReference type="ProteomicsDB" id="47773"/>
<dbReference type="Pumba" id="O00194"/>
<dbReference type="Antibodypedia" id="4487">
    <property type="antibodies" value="275 antibodies from 32 providers"/>
</dbReference>
<dbReference type="DNASU" id="5874"/>
<dbReference type="Ensembl" id="ENST00000262094.10">
    <property type="protein sequence ID" value="ENSP00000262094.4"/>
    <property type="gene ID" value="ENSG00000041353.10"/>
</dbReference>
<dbReference type="GeneID" id="5874"/>
<dbReference type="KEGG" id="hsa:5874"/>
<dbReference type="MANE-Select" id="ENST00000262094.10">
    <property type="protein sequence ID" value="ENSP00000262094.4"/>
    <property type="RefSeq nucleotide sequence ID" value="NM_004163.4"/>
    <property type="RefSeq protein sequence ID" value="NP_004154.2"/>
</dbReference>
<dbReference type="UCSC" id="uc002lfr.4">
    <property type="organism name" value="human"/>
</dbReference>
<dbReference type="AGR" id="HGNC:9767"/>
<dbReference type="CTD" id="5874"/>
<dbReference type="DisGeNET" id="5874"/>
<dbReference type="GeneCards" id="RAB27B"/>
<dbReference type="HGNC" id="HGNC:9767">
    <property type="gene designation" value="RAB27B"/>
</dbReference>
<dbReference type="HPA" id="ENSG00000041353">
    <property type="expression patterns" value="Tissue enhanced (stomach)"/>
</dbReference>
<dbReference type="MIM" id="603869">
    <property type="type" value="gene"/>
</dbReference>
<dbReference type="neXtProt" id="NX_O00194"/>
<dbReference type="OpenTargets" id="ENSG00000041353"/>
<dbReference type="PharmGKB" id="PA34118"/>
<dbReference type="VEuPathDB" id="HostDB:ENSG00000041353"/>
<dbReference type="eggNOG" id="KOG0081">
    <property type="taxonomic scope" value="Eukaryota"/>
</dbReference>
<dbReference type="GeneTree" id="ENSGT00940000157449"/>
<dbReference type="HOGENOM" id="CLU_041217_10_1_1"/>
<dbReference type="InParanoid" id="O00194"/>
<dbReference type="OMA" id="IEKKCAC"/>
<dbReference type="OrthoDB" id="9989112at2759"/>
<dbReference type="PAN-GO" id="O00194">
    <property type="GO annotations" value="7 GO annotations based on evolutionary models"/>
</dbReference>
<dbReference type="PhylomeDB" id="O00194"/>
<dbReference type="TreeFam" id="TF312895"/>
<dbReference type="PathwayCommons" id="O00194"/>
<dbReference type="Reactome" id="R-HSA-114608">
    <property type="pathway name" value="Platelet degranulation"/>
</dbReference>
<dbReference type="Reactome" id="R-HSA-8873719">
    <property type="pathway name" value="RAB geranylgeranylation"/>
</dbReference>
<dbReference type="Reactome" id="R-HSA-8876198">
    <property type="pathway name" value="RAB GEFs exchange GTP for GDP on RABs"/>
</dbReference>
<dbReference type="SignaLink" id="O00194"/>
<dbReference type="BioGRID-ORCS" id="5874">
    <property type="hits" value="7 hits in 1154 CRISPR screens"/>
</dbReference>
<dbReference type="ChiTaRS" id="RAB27B">
    <property type="organism name" value="human"/>
</dbReference>
<dbReference type="EvolutionaryTrace" id="O00194"/>
<dbReference type="GenomeRNAi" id="5874"/>
<dbReference type="Pharos" id="O00194">
    <property type="development level" value="Tbio"/>
</dbReference>
<dbReference type="PRO" id="PR:O00194"/>
<dbReference type="Proteomes" id="UP000005640">
    <property type="component" value="Chromosome 18"/>
</dbReference>
<dbReference type="RNAct" id="O00194">
    <property type="molecule type" value="protein"/>
</dbReference>
<dbReference type="Bgee" id="ENSG00000041353">
    <property type="expression patterns" value="Expressed in esophagus squamous epithelium and 182 other cell types or tissues"/>
</dbReference>
<dbReference type="ExpressionAtlas" id="O00194">
    <property type="expression patterns" value="baseline and differential"/>
</dbReference>
<dbReference type="GO" id="GO:0016324">
    <property type="term" value="C:apical plasma membrane"/>
    <property type="evidence" value="ECO:0000318"/>
    <property type="project" value="GO_Central"/>
</dbReference>
<dbReference type="GO" id="GO:1904115">
    <property type="term" value="C:axon cytoplasm"/>
    <property type="evidence" value="ECO:0007669"/>
    <property type="project" value="GOC"/>
</dbReference>
<dbReference type="GO" id="GO:0070382">
    <property type="term" value="C:exocytic vesicle"/>
    <property type="evidence" value="ECO:0000318"/>
    <property type="project" value="GO_Central"/>
</dbReference>
<dbReference type="GO" id="GO:0070062">
    <property type="term" value="C:extracellular exosome"/>
    <property type="evidence" value="ECO:0007005"/>
    <property type="project" value="UniProtKB"/>
</dbReference>
<dbReference type="GO" id="GO:0005794">
    <property type="term" value="C:Golgi apparatus"/>
    <property type="evidence" value="ECO:0000318"/>
    <property type="project" value="GO_Central"/>
</dbReference>
<dbReference type="GO" id="GO:0005795">
    <property type="term" value="C:Golgi stack"/>
    <property type="evidence" value="ECO:0000314"/>
    <property type="project" value="UniProtKB"/>
</dbReference>
<dbReference type="GO" id="GO:0005770">
    <property type="term" value="C:late endosome"/>
    <property type="evidence" value="ECO:0000314"/>
    <property type="project" value="UniProtKB"/>
</dbReference>
<dbReference type="GO" id="GO:0042470">
    <property type="term" value="C:melanosome"/>
    <property type="evidence" value="ECO:0000314"/>
    <property type="project" value="UniProtKB"/>
</dbReference>
<dbReference type="GO" id="GO:0032585">
    <property type="term" value="C:multivesicular body membrane"/>
    <property type="evidence" value="ECO:0000314"/>
    <property type="project" value="UniProtKB"/>
</dbReference>
<dbReference type="GO" id="GO:0005886">
    <property type="term" value="C:plasma membrane"/>
    <property type="evidence" value="ECO:0000304"/>
    <property type="project" value="Reactome"/>
</dbReference>
<dbReference type="GO" id="GO:0031088">
    <property type="term" value="C:platelet dense granule membrane"/>
    <property type="evidence" value="ECO:0000304"/>
    <property type="project" value="Reactome"/>
</dbReference>
<dbReference type="GO" id="GO:0030141">
    <property type="term" value="C:secretory granule"/>
    <property type="evidence" value="ECO:0000318"/>
    <property type="project" value="GO_Central"/>
</dbReference>
<dbReference type="GO" id="GO:0030672">
    <property type="term" value="C:synaptic vesicle membrane"/>
    <property type="evidence" value="ECO:0007669"/>
    <property type="project" value="Ensembl"/>
</dbReference>
<dbReference type="GO" id="GO:0030140">
    <property type="term" value="C:trans-Golgi network transport vesicle"/>
    <property type="evidence" value="ECO:0000314"/>
    <property type="project" value="UniProtKB"/>
</dbReference>
<dbReference type="GO" id="GO:0042589">
    <property type="term" value="C:zymogen granule membrane"/>
    <property type="evidence" value="ECO:0007669"/>
    <property type="project" value="Ensembl"/>
</dbReference>
<dbReference type="GO" id="GO:0003925">
    <property type="term" value="F:G protein activity"/>
    <property type="evidence" value="ECO:0007669"/>
    <property type="project" value="UniProtKB-EC"/>
</dbReference>
<dbReference type="GO" id="GO:0019003">
    <property type="term" value="F:GDP binding"/>
    <property type="evidence" value="ECO:0000314"/>
    <property type="project" value="UniProtKB"/>
</dbReference>
<dbReference type="GO" id="GO:0005525">
    <property type="term" value="F:GTP binding"/>
    <property type="evidence" value="ECO:0000314"/>
    <property type="project" value="UniProtKB"/>
</dbReference>
<dbReference type="GO" id="GO:0003924">
    <property type="term" value="F:GTPase activity"/>
    <property type="evidence" value="ECO:0000250"/>
    <property type="project" value="UniProtKB"/>
</dbReference>
<dbReference type="GO" id="GO:0031489">
    <property type="term" value="F:myosin V binding"/>
    <property type="evidence" value="ECO:0000353"/>
    <property type="project" value="UniProtKB"/>
</dbReference>
<dbReference type="GO" id="GO:0019904">
    <property type="term" value="F:protein domain specific binding"/>
    <property type="evidence" value="ECO:0000353"/>
    <property type="project" value="UniProtKB"/>
</dbReference>
<dbReference type="GO" id="GO:0099641">
    <property type="term" value="P:anterograde axonal protein transport"/>
    <property type="evidence" value="ECO:0000250"/>
    <property type="project" value="UniProtKB"/>
</dbReference>
<dbReference type="GO" id="GO:0006887">
    <property type="term" value="P:exocytosis"/>
    <property type="evidence" value="ECO:0000318"/>
    <property type="project" value="GO_Central"/>
</dbReference>
<dbReference type="GO" id="GO:0071985">
    <property type="term" value="P:multivesicular body sorting pathway"/>
    <property type="evidence" value="ECO:0000315"/>
    <property type="project" value="UniProtKB"/>
</dbReference>
<dbReference type="GO" id="GO:0045921">
    <property type="term" value="P:positive regulation of exocytosis"/>
    <property type="evidence" value="ECO:0000315"/>
    <property type="project" value="UniProtKB"/>
</dbReference>
<dbReference type="GO" id="GO:0048488">
    <property type="term" value="P:synaptic vesicle endocytosis"/>
    <property type="evidence" value="ECO:0007669"/>
    <property type="project" value="Ensembl"/>
</dbReference>
<dbReference type="CDD" id="cd04127">
    <property type="entry name" value="Rab27A"/>
    <property type="match status" value="1"/>
</dbReference>
<dbReference type="FunFam" id="3.40.50.300:FF:000402">
    <property type="entry name" value="Ras-related protein Rab-27A"/>
    <property type="match status" value="1"/>
</dbReference>
<dbReference type="Gene3D" id="3.40.50.300">
    <property type="entry name" value="P-loop containing nucleotide triphosphate hydrolases"/>
    <property type="match status" value="1"/>
</dbReference>
<dbReference type="InterPro" id="IPR027417">
    <property type="entry name" value="P-loop_NTPase"/>
</dbReference>
<dbReference type="InterPro" id="IPR041837">
    <property type="entry name" value="Rab27a/b"/>
</dbReference>
<dbReference type="InterPro" id="IPR005225">
    <property type="entry name" value="Small_GTP-bd"/>
</dbReference>
<dbReference type="InterPro" id="IPR001806">
    <property type="entry name" value="Small_GTPase"/>
</dbReference>
<dbReference type="InterPro" id="IPR050305">
    <property type="entry name" value="Small_GTPase_Rab"/>
</dbReference>
<dbReference type="NCBIfam" id="TIGR00231">
    <property type="entry name" value="small_GTP"/>
    <property type="match status" value="1"/>
</dbReference>
<dbReference type="PANTHER" id="PTHR47980">
    <property type="entry name" value="LD44762P"/>
    <property type="match status" value="1"/>
</dbReference>
<dbReference type="Pfam" id="PF00071">
    <property type="entry name" value="Ras"/>
    <property type="match status" value="1"/>
</dbReference>
<dbReference type="PRINTS" id="PR00449">
    <property type="entry name" value="RASTRNSFRMNG"/>
</dbReference>
<dbReference type="SMART" id="SM00175">
    <property type="entry name" value="RAB"/>
    <property type="match status" value="1"/>
</dbReference>
<dbReference type="SMART" id="SM00176">
    <property type="entry name" value="RAN"/>
    <property type="match status" value="1"/>
</dbReference>
<dbReference type="SMART" id="SM00173">
    <property type="entry name" value="RAS"/>
    <property type="match status" value="1"/>
</dbReference>
<dbReference type="SMART" id="SM00174">
    <property type="entry name" value="RHO"/>
    <property type="match status" value="1"/>
</dbReference>
<dbReference type="SUPFAM" id="SSF52540">
    <property type="entry name" value="P-loop containing nucleoside triphosphate hydrolases"/>
    <property type="match status" value="1"/>
</dbReference>
<dbReference type="PROSITE" id="PS51419">
    <property type="entry name" value="RAB"/>
    <property type="match status" value="1"/>
</dbReference>
<feature type="initiator methionine" description="Removed" evidence="8">
    <location>
        <position position="1"/>
    </location>
</feature>
<feature type="chain" id="PRO_0000121224" description="Ras-related protein Rab-27B">
    <location>
        <begin position="2"/>
        <end position="218"/>
    </location>
</feature>
<feature type="region of interest" description="Disordered" evidence="4">
    <location>
        <begin position="194"/>
        <end position="218"/>
    </location>
</feature>
<feature type="short sequence motif" description="Effector region" evidence="1">
    <location>
        <begin position="38"/>
        <end position="46"/>
    </location>
</feature>
<feature type="compositionally biased region" description="Basic and acidic residues" evidence="4">
    <location>
        <begin position="207"/>
        <end position="218"/>
    </location>
</feature>
<feature type="binding site">
    <location>
        <begin position="16"/>
        <end position="24"/>
    </location>
    <ligand>
        <name>GTP</name>
        <dbReference type="ChEBI" id="CHEBI:37565"/>
    </ligand>
</feature>
<feature type="binding site" evidence="1">
    <location>
        <begin position="74"/>
        <end position="78"/>
    </location>
    <ligand>
        <name>GTP</name>
        <dbReference type="ChEBI" id="CHEBI:37565"/>
    </ligand>
</feature>
<feature type="binding site">
    <location>
        <begin position="133"/>
        <end position="136"/>
    </location>
    <ligand>
        <name>GTP</name>
        <dbReference type="ChEBI" id="CHEBI:37565"/>
    </ligand>
</feature>
<feature type="binding site">
    <location>
        <begin position="163"/>
        <end position="165"/>
    </location>
    <ligand>
        <name>GTP</name>
        <dbReference type="ChEBI" id="CHEBI:37565"/>
    </ligand>
</feature>
<feature type="modified residue" description="N-acetylthreonine" evidence="8">
    <location>
        <position position="2"/>
    </location>
</feature>
<feature type="modified residue" description="Cysteine methyl ester" evidence="1">
    <location>
        <position position="218"/>
    </location>
</feature>
<feature type="lipid moiety-binding region" description="S-geranylgeranyl cysteine" evidence="1">
    <location>
        <position position="216"/>
    </location>
</feature>
<feature type="lipid moiety-binding region" description="S-geranylgeranyl cysteine" evidence="1">
    <location>
        <position position="218"/>
    </location>
</feature>
<feature type="disulfide bond" evidence="7">
    <location>
        <begin position="123"/>
        <end position="188"/>
    </location>
</feature>
<feature type="sequence variant" id="VAR_051714" description="In dbSNP:rs9966265.">
    <original>A</original>
    <variation>T</variation>
    <location>
        <position position="92"/>
    </location>
</feature>
<feature type="mutagenesis site" description="GDP-locked. Increases interaction with DENND10. Disrupts late endocytic pathway homeostasis." evidence="6">
    <original>T</original>
    <variation>N</variation>
    <location>
        <position position="23"/>
    </location>
</feature>
<feature type="mutagenesis site" description="GTP-locked. decreases interaction with DENND10." evidence="6">
    <original>Q</original>
    <variation>L</variation>
    <location>
        <position position="78"/>
    </location>
</feature>
<feature type="strand" evidence="11">
    <location>
        <begin position="7"/>
        <end position="16"/>
    </location>
</feature>
<feature type="helix" evidence="11">
    <location>
        <begin position="22"/>
        <end position="30"/>
    </location>
</feature>
<feature type="strand" evidence="11">
    <location>
        <begin position="37"/>
        <end position="54"/>
    </location>
</feature>
<feature type="strand" evidence="11">
    <location>
        <begin position="65"/>
        <end position="77"/>
    </location>
</feature>
<feature type="helix" evidence="11">
    <location>
        <begin position="78"/>
        <end position="89"/>
    </location>
</feature>
<feature type="strand" evidence="11">
    <location>
        <begin position="94"/>
        <end position="100"/>
    </location>
</feature>
<feature type="helix" evidence="11">
    <location>
        <begin position="104"/>
        <end position="115"/>
    </location>
</feature>
<feature type="turn" evidence="11">
    <location>
        <begin position="122"/>
        <end position="124"/>
    </location>
</feature>
<feature type="strand" evidence="11">
    <location>
        <begin position="127"/>
        <end position="133"/>
    </location>
</feature>
<feature type="helix" evidence="11">
    <location>
        <begin position="138"/>
        <end position="140"/>
    </location>
</feature>
<feature type="helix" evidence="11">
    <location>
        <begin position="145"/>
        <end position="154"/>
    </location>
</feature>
<feature type="strand" evidence="11">
    <location>
        <begin position="159"/>
        <end position="162"/>
    </location>
</feature>
<feature type="turn" evidence="11">
    <location>
        <begin position="164"/>
        <end position="166"/>
    </location>
</feature>
<feature type="helix" evidence="11">
    <location>
        <begin position="170"/>
        <end position="188"/>
    </location>
</feature>
<comment type="function">
    <text evidence="2 5 6">Small GTPase which cycles between active GTP-bound and inactive GDP-bound states. In its active state, binds to a variety of effector proteins to regulate homeostasis of late endocytic pathway, including endosomal positioning, maturation and secretion (PubMed:30771381). Plays a role in NTRK2/TRKB axonal anterograde transport by facilitating the association of NTRK2/TRKB with KLC1 (PubMed:21775604). May be involved in targeting uroplakins to urothelial apical membranes (By similarity).</text>
</comment>
<comment type="catalytic activity">
    <reaction evidence="10">
        <text>GTP + H2O = GDP + phosphate + H(+)</text>
        <dbReference type="Rhea" id="RHEA:19669"/>
        <dbReference type="ChEBI" id="CHEBI:15377"/>
        <dbReference type="ChEBI" id="CHEBI:15378"/>
        <dbReference type="ChEBI" id="CHEBI:37565"/>
        <dbReference type="ChEBI" id="CHEBI:43474"/>
        <dbReference type="ChEBI" id="CHEBI:58189"/>
        <dbReference type="EC" id="3.6.5.2"/>
    </reaction>
    <physiologicalReaction direction="left-to-right" evidence="10">
        <dbReference type="Rhea" id="RHEA:19670"/>
    </physiologicalReaction>
</comment>
<comment type="activity regulation">
    <text evidence="10">Regulated by guanine nucleotide exchange factors (GEFs) which promote the exchange of bound GDP for free GTP, GTPase activating proteins (GAPs) which increase the GTP hydrolysis activity, and GDP dissociation inhibitors which inhibit the dissociation of the nucleotide from the GTPase. Activated by GEFs such as DENND10.</text>
</comment>
<comment type="subunit">
    <text evidence="3 6">Interacts with SYTL2, SYTL4, MYRIP and MLPH. Interacts with RPH3A and RPH3A (By similarity). Interacts (GDP-bound form preferentially) with DENND10 (PubMed:30771381).</text>
</comment>
<comment type="interaction">
    <interactant intactId="EBI-10179046">
        <id>O00194</id>
    </interactant>
    <interactant intactId="EBI-603614">
        <id>Q03135</id>
        <label>CAV1</label>
    </interactant>
    <organismsDiffer>false</organismsDiffer>
    <experiments>2</experiments>
</comment>
<comment type="interaction">
    <interactant intactId="EBI-10179046">
        <id>O00194</id>
    </interactant>
    <interactant intactId="EBI-741925">
        <id>P49366</id>
        <label>DHPS</label>
    </interactant>
    <organismsDiffer>false</organismsDiffer>
    <experiments>6</experiments>
</comment>
<comment type="interaction">
    <interactant intactId="EBI-10179046">
        <id>O00194</id>
    </interactant>
    <interactant intactId="EBI-739467">
        <id>Q9H8Y8</id>
        <label>GORASP2</label>
    </interactant>
    <organismsDiffer>false</organismsDiffer>
    <experiments>3</experiments>
</comment>
<comment type="interaction">
    <interactant intactId="EBI-10179046">
        <id>O00194</id>
    </interactant>
    <interactant intactId="EBI-7042162">
        <id>Q9BV36</id>
        <label>MLPH</label>
    </interactant>
    <organismsDiffer>false</organismsDiffer>
    <experiments>4</experiments>
</comment>
<comment type="interaction">
    <interactant intactId="EBI-10179046">
        <id>O00194</id>
    </interactant>
    <interactant intactId="EBI-1759414">
        <id>Q8NFW9</id>
        <label>MYRIP</label>
    </interactant>
    <organismsDiffer>false</organismsDiffer>
    <experiments>3</experiments>
</comment>
<comment type="interaction">
    <interactant intactId="EBI-10179046">
        <id>O00194</id>
    </interactant>
    <interactant intactId="EBI-16808141">
        <id>Q9Y2J0-2</id>
        <label>RPH3A</label>
    </interactant>
    <organismsDiffer>false</organismsDiffer>
    <experiments>3</experiments>
</comment>
<comment type="interaction">
    <interactant intactId="EBI-10179046">
        <id>O00194</id>
    </interactant>
    <interactant intactId="EBI-2855824">
        <id>Q9UNE2</id>
        <label>RPH3AL</label>
    </interactant>
    <organismsDiffer>false</organismsDiffer>
    <experiments>3</experiments>
</comment>
<comment type="interaction">
    <interactant intactId="EBI-10179046">
        <id>O00194</id>
    </interactant>
    <interactant intactId="EBI-2939487">
        <id>Q8TDW5</id>
        <label>SYTL5</label>
    </interactant>
    <organismsDiffer>false</organismsDiffer>
    <experiments>7</experiments>
</comment>
<comment type="interaction">
    <interactant intactId="EBI-10179046">
        <id>O00194</id>
    </interactant>
    <interactant intactId="EBI-12243980">
        <id>Q8TDW5-2</id>
        <label>SYTL5</label>
    </interactant>
    <organismsDiffer>false</organismsDiffer>
    <experiments>3</experiments>
</comment>
<comment type="subcellular location">
    <subcellularLocation>
        <location>Membrane</location>
        <topology>Lipid-anchor</topology>
    </subcellularLocation>
    <subcellularLocation>
        <location evidence="6">Late endosome</location>
    </subcellularLocation>
</comment>
<comment type="tissue specificity">
    <text>Expressed primarily in testis.</text>
</comment>
<comment type="similarity">
    <text evidence="9">Belongs to the small GTPase superfamily. Rab family.</text>
</comment>
<accession>O00194</accession>
<accession>B2RAB0</accession>
<accession>Q9BZB6</accession>
<proteinExistence type="evidence at protein level"/>